<dbReference type="EMBL" id="AF328962">
    <property type="protein sequence ID" value="AAK16717.1"/>
    <property type="molecule type" value="Genomic_DNA"/>
</dbReference>
<dbReference type="EMBL" id="AF328963">
    <property type="protein sequence ID" value="AAK16717.1"/>
    <property type="status" value="JOINED"/>
    <property type="molecule type" value="Genomic_DNA"/>
</dbReference>
<dbReference type="CCDS" id="CCDS8866.1"/>
<dbReference type="PIR" id="S14933">
    <property type="entry name" value="S14933"/>
</dbReference>
<dbReference type="RefSeq" id="NP_776272.1">
    <property type="nucleotide sequence ID" value="NM_173860.3"/>
</dbReference>
<dbReference type="SMR" id="P31275"/>
<dbReference type="BioGRID" id="109468">
    <property type="interactions" value="5"/>
</dbReference>
<dbReference type="FunCoup" id="P31275">
    <property type="interactions" value="252"/>
</dbReference>
<dbReference type="IntAct" id="P31275">
    <property type="interactions" value="5"/>
</dbReference>
<dbReference type="STRING" id="9606.ENSP00000243103"/>
<dbReference type="iPTMnet" id="P31275"/>
<dbReference type="PhosphoSitePlus" id="P31275"/>
<dbReference type="BioMuta" id="HOXC12"/>
<dbReference type="DMDM" id="20141538"/>
<dbReference type="jPOST" id="P31275"/>
<dbReference type="MassIVE" id="P31275"/>
<dbReference type="PaxDb" id="9606-ENSP00000243103"/>
<dbReference type="PeptideAtlas" id="P31275"/>
<dbReference type="ProteomicsDB" id="54775"/>
<dbReference type="Antibodypedia" id="27304">
    <property type="antibodies" value="182 antibodies from 25 providers"/>
</dbReference>
<dbReference type="DNASU" id="3228"/>
<dbReference type="Ensembl" id="ENST00000243103.4">
    <property type="protein sequence ID" value="ENSP00000243103.3"/>
    <property type="gene ID" value="ENSG00000123407.4"/>
</dbReference>
<dbReference type="GeneID" id="3228"/>
<dbReference type="KEGG" id="hsa:3228"/>
<dbReference type="MANE-Select" id="ENST00000243103.4">
    <property type="protein sequence ID" value="ENSP00000243103.3"/>
    <property type="RefSeq nucleotide sequence ID" value="NM_173860.3"/>
    <property type="RefSeq protein sequence ID" value="NP_776272.1"/>
</dbReference>
<dbReference type="UCSC" id="uc010soq.3">
    <property type="organism name" value="human"/>
</dbReference>
<dbReference type="AGR" id="HGNC:5124"/>
<dbReference type="CTD" id="3228"/>
<dbReference type="DisGeNET" id="3228"/>
<dbReference type="GeneCards" id="HOXC12"/>
<dbReference type="HGNC" id="HGNC:5124">
    <property type="gene designation" value="HOXC12"/>
</dbReference>
<dbReference type="HPA" id="ENSG00000123407">
    <property type="expression patterns" value="Group enriched (adipose tissue, skin)"/>
</dbReference>
<dbReference type="MIM" id="142975">
    <property type="type" value="gene"/>
</dbReference>
<dbReference type="neXtProt" id="NX_P31275"/>
<dbReference type="OpenTargets" id="ENSG00000123407"/>
<dbReference type="PharmGKB" id="PA29399"/>
<dbReference type="VEuPathDB" id="HostDB:ENSG00000123407"/>
<dbReference type="eggNOG" id="KOG0487">
    <property type="taxonomic scope" value="Eukaryota"/>
</dbReference>
<dbReference type="GeneTree" id="ENSGT00940000161307"/>
<dbReference type="HOGENOM" id="CLU_087968_1_0_1"/>
<dbReference type="InParanoid" id="P31275"/>
<dbReference type="OMA" id="SYYREPC"/>
<dbReference type="OrthoDB" id="9886711at2759"/>
<dbReference type="PAN-GO" id="P31275">
    <property type="GO annotations" value="1 GO annotation based on evolutionary models"/>
</dbReference>
<dbReference type="PhylomeDB" id="P31275"/>
<dbReference type="TreeFam" id="TF351604"/>
<dbReference type="PathwayCommons" id="P31275"/>
<dbReference type="BioGRID-ORCS" id="3228">
    <property type="hits" value="19 hits in 1169 CRISPR screens"/>
</dbReference>
<dbReference type="GeneWiki" id="HOXC12"/>
<dbReference type="GenomeRNAi" id="3228"/>
<dbReference type="Pharos" id="P31275">
    <property type="development level" value="Tbio"/>
</dbReference>
<dbReference type="PRO" id="PR:P31275"/>
<dbReference type="Proteomes" id="UP000005640">
    <property type="component" value="Chromosome 12"/>
</dbReference>
<dbReference type="RNAct" id="P31275">
    <property type="molecule type" value="protein"/>
</dbReference>
<dbReference type="Bgee" id="ENSG00000123407">
    <property type="expression patterns" value="Expressed in male germ line stem cell (sensu Vertebrata) in testis and 17 other cell types or tissues"/>
</dbReference>
<dbReference type="GO" id="GO:0005634">
    <property type="term" value="C:nucleus"/>
    <property type="evidence" value="ECO:0007669"/>
    <property type="project" value="UniProtKB-SubCell"/>
</dbReference>
<dbReference type="GO" id="GO:0000981">
    <property type="term" value="F:DNA-binding transcription factor activity, RNA polymerase II-specific"/>
    <property type="evidence" value="ECO:0007669"/>
    <property type="project" value="InterPro"/>
</dbReference>
<dbReference type="GO" id="GO:1990837">
    <property type="term" value="F:sequence-specific double-stranded DNA binding"/>
    <property type="evidence" value="ECO:0000314"/>
    <property type="project" value="ARUK-UCL"/>
</dbReference>
<dbReference type="CDD" id="cd00086">
    <property type="entry name" value="homeodomain"/>
    <property type="match status" value="1"/>
</dbReference>
<dbReference type="Gene3D" id="1.10.10.60">
    <property type="entry name" value="Homeodomain-like"/>
    <property type="match status" value="1"/>
</dbReference>
<dbReference type="InterPro" id="IPR001356">
    <property type="entry name" value="HD"/>
</dbReference>
<dbReference type="InterPro" id="IPR020479">
    <property type="entry name" value="HD_metazoa"/>
</dbReference>
<dbReference type="InterPro" id="IPR017970">
    <property type="entry name" value="Homeobox_CS"/>
</dbReference>
<dbReference type="InterPro" id="IPR009057">
    <property type="entry name" value="Homeodomain-like_sf"/>
</dbReference>
<dbReference type="PANTHER" id="PTHR46440:SF2">
    <property type="entry name" value="HOMEOBOX PROTEIN HOX-C12"/>
    <property type="match status" value="1"/>
</dbReference>
<dbReference type="PANTHER" id="PTHR46440">
    <property type="entry name" value="HOMEOBOX PROTEIN HOX-D12-RELATED"/>
    <property type="match status" value="1"/>
</dbReference>
<dbReference type="Pfam" id="PF00046">
    <property type="entry name" value="Homeodomain"/>
    <property type="match status" value="1"/>
</dbReference>
<dbReference type="PRINTS" id="PR00024">
    <property type="entry name" value="HOMEOBOX"/>
</dbReference>
<dbReference type="SMART" id="SM00389">
    <property type="entry name" value="HOX"/>
    <property type="match status" value="1"/>
</dbReference>
<dbReference type="SUPFAM" id="SSF46689">
    <property type="entry name" value="Homeodomain-like"/>
    <property type="match status" value="1"/>
</dbReference>
<dbReference type="PROSITE" id="PS00027">
    <property type="entry name" value="HOMEOBOX_1"/>
    <property type="match status" value="1"/>
</dbReference>
<dbReference type="PROSITE" id="PS50071">
    <property type="entry name" value="HOMEOBOX_2"/>
    <property type="match status" value="1"/>
</dbReference>
<accession>P31275</accession>
<accession>Q9BXJ6</accession>
<organism>
    <name type="scientific">Homo sapiens</name>
    <name type="common">Human</name>
    <dbReference type="NCBI Taxonomy" id="9606"/>
    <lineage>
        <taxon>Eukaryota</taxon>
        <taxon>Metazoa</taxon>
        <taxon>Chordata</taxon>
        <taxon>Craniata</taxon>
        <taxon>Vertebrata</taxon>
        <taxon>Euteleostomi</taxon>
        <taxon>Mammalia</taxon>
        <taxon>Eutheria</taxon>
        <taxon>Euarchontoglires</taxon>
        <taxon>Primates</taxon>
        <taxon>Haplorrhini</taxon>
        <taxon>Catarrhini</taxon>
        <taxon>Hominidae</taxon>
        <taxon>Homo</taxon>
    </lineage>
</organism>
<evidence type="ECO:0000255" key="1">
    <source>
        <dbReference type="PROSITE-ProRule" id="PRU00108"/>
    </source>
</evidence>
<evidence type="ECO:0000256" key="2">
    <source>
        <dbReference type="SAM" id="MobiDB-lite"/>
    </source>
</evidence>
<evidence type="ECO:0000305" key="3"/>
<protein>
    <recommendedName>
        <fullName>Homeobox protein Hox-C12</fullName>
    </recommendedName>
    <alternativeName>
        <fullName>Homeobox protein Hox-3F</fullName>
    </alternativeName>
</protein>
<keyword id="KW-0217">Developmental protein</keyword>
<keyword id="KW-0238">DNA-binding</keyword>
<keyword id="KW-0371">Homeobox</keyword>
<keyword id="KW-0539">Nucleus</keyword>
<keyword id="KW-1267">Proteomics identification</keyword>
<keyword id="KW-1185">Reference proteome</keyword>
<keyword id="KW-0804">Transcription</keyword>
<keyword id="KW-0805">Transcription regulation</keyword>
<reference key="1">
    <citation type="journal article" date="2002" name="Teratology">
        <title>Complete mutation analysis panel of the 39 human HOX genes.</title>
        <authorList>
            <person name="Kosaki K."/>
            <person name="Kosaki R."/>
            <person name="Suzuki T."/>
            <person name="Yoshihashi H."/>
            <person name="Takahashi T."/>
            <person name="Sasaki K."/>
            <person name="Tomita M."/>
            <person name="McGinnis W."/>
            <person name="Matsuo N."/>
        </authorList>
    </citation>
    <scope>NUCLEOTIDE SEQUENCE [GENOMIC DNA]</scope>
</reference>
<reference key="2">
    <citation type="journal article" date="1989" name="Nucleic Acids Res.">
        <title>The human HOX gene family.</title>
        <authorList>
            <person name="Acampora D."/>
            <person name="D'Esposito M."/>
            <person name="Faiella A."/>
            <person name="Pannese M."/>
            <person name="Migliaccio E."/>
            <person name="Morelli F."/>
            <person name="Stornaiuolo A."/>
            <person name="Nigro V."/>
            <person name="Simeone A."/>
            <person name="Boncinelli E."/>
        </authorList>
    </citation>
    <scope>NUCLEOTIDE SEQUENCE [GENOMIC DNA] OF 214-279</scope>
</reference>
<sequence length="282" mass="30171">MGEHNLLNPGFVGPLVNIHTGDTFYFPNFRASGAQLPGLPSLSYPRRDNVCSLSWPSAEPCNGYPQPYLGSPVSLNPPFGRTCELARVEDGKGYYREPCAEGGGGGLKREERGRDPGAGPGAALLPLEPSGPPALGFKYDYAAGGGGGDGGGGAGPPHDPPSCQSLESDSSSSLLNEGNKGAGAGDPGSLVSPLNPGGGLSASGAPWYPINSRSRKKRKPYSKLQLAELEGEFLVNEFITRQRRRELSDRLNLSDQQVKIWFQNRRMKKKRLLLREQALSFF</sequence>
<comment type="function">
    <text>Sequence-specific transcription factor which is part of a developmental regulatory system that provides cells with specific positional identities on the anterior-posterior axis.</text>
</comment>
<comment type="subcellular location">
    <subcellularLocation>
        <location>Nucleus</location>
    </subcellularLocation>
</comment>
<comment type="similarity">
    <text evidence="3">Belongs to the Abd-B homeobox family.</text>
</comment>
<proteinExistence type="evidence at protein level"/>
<feature type="chain" id="PRO_0000200194" description="Homeobox protein Hox-C12">
    <location>
        <begin position="1"/>
        <end position="282"/>
    </location>
</feature>
<feature type="DNA-binding region" description="Homeobox" evidence="1">
    <location>
        <begin position="214"/>
        <end position="273"/>
    </location>
</feature>
<feature type="region of interest" description="Disordered" evidence="2">
    <location>
        <begin position="94"/>
        <end position="129"/>
    </location>
</feature>
<feature type="region of interest" description="Disordered" evidence="2">
    <location>
        <begin position="147"/>
        <end position="214"/>
    </location>
</feature>
<feature type="compositionally biased region" description="Low complexity" evidence="2">
    <location>
        <begin position="162"/>
        <end position="175"/>
    </location>
</feature>
<name>HXC12_HUMAN</name>
<gene>
    <name type="primary">HOXC12</name>
    <name type="synonym">HOC3F</name>
    <name type="synonym">HOX3F</name>
</gene>